<dbReference type="EMBL" id="AC144738">
    <property type="protein sequence ID" value="AAT77343.1"/>
    <property type="molecule type" value="Genomic_DNA"/>
</dbReference>
<dbReference type="EMBL" id="AP008211">
    <property type="protein sequence ID" value="BAF16703.1"/>
    <property type="molecule type" value="Genomic_DNA"/>
</dbReference>
<dbReference type="EMBL" id="AP014961">
    <property type="protein sequence ID" value="BAS92520.1"/>
    <property type="molecule type" value="Genomic_DNA"/>
</dbReference>
<dbReference type="EMBL" id="CM000142">
    <property type="protein sequence ID" value="EAZ33064.1"/>
    <property type="molecule type" value="Genomic_DNA"/>
</dbReference>
<dbReference type="EMBL" id="CM000142">
    <property type="protein sequence ID" value="EEE62514.1"/>
    <property type="molecule type" value="Genomic_DNA"/>
</dbReference>
<dbReference type="EMBL" id="AK102679">
    <property type="protein sequence ID" value="BAG95667.1"/>
    <property type="molecule type" value="mRNA"/>
</dbReference>
<dbReference type="RefSeq" id="XP_015638393.1">
    <property type="nucleotide sequence ID" value="XM_015782907.1"/>
</dbReference>
<dbReference type="STRING" id="39947.Q6AT25"/>
<dbReference type="PaxDb" id="39947-Q6AT25"/>
<dbReference type="EnsemblPlants" id="Os05t0176400-01">
    <property type="protein sequence ID" value="Os05t0176400-01"/>
    <property type="gene ID" value="Os05g0176400"/>
</dbReference>
<dbReference type="Gramene" id="Os05t0176400-01">
    <property type="protein sequence ID" value="Os05t0176400-01"/>
    <property type="gene ID" value="Os05g0176400"/>
</dbReference>
<dbReference type="KEGG" id="dosa:Os05g0176400"/>
<dbReference type="eggNOG" id="KOG4791">
    <property type="taxonomic scope" value="Eukaryota"/>
</dbReference>
<dbReference type="HOGENOM" id="CLU_518195_0_0_1"/>
<dbReference type="InParanoid" id="Q6AT25"/>
<dbReference type="OMA" id="CRIHEAR"/>
<dbReference type="OrthoDB" id="5395350at2759"/>
<dbReference type="Proteomes" id="UP000000763">
    <property type="component" value="Chromosome 5"/>
</dbReference>
<dbReference type="Proteomes" id="UP000007752">
    <property type="component" value="Chromosome 5"/>
</dbReference>
<dbReference type="Proteomes" id="UP000059680">
    <property type="component" value="Chromosome 5"/>
</dbReference>
<dbReference type="GO" id="GO:0003677">
    <property type="term" value="F:DNA binding"/>
    <property type="evidence" value="ECO:0007669"/>
    <property type="project" value="UniProtKB-KW"/>
</dbReference>
<dbReference type="GO" id="GO:0003729">
    <property type="term" value="F:mRNA binding"/>
    <property type="evidence" value="ECO:0000318"/>
    <property type="project" value="GO_Central"/>
</dbReference>
<dbReference type="GO" id="GO:0008270">
    <property type="term" value="F:zinc ion binding"/>
    <property type="evidence" value="ECO:0007669"/>
    <property type="project" value="UniProtKB-KW"/>
</dbReference>
<dbReference type="FunFam" id="4.10.1000.10:FF:000021">
    <property type="entry name" value="Zinc finger CCCH domain-containing protein 17"/>
    <property type="match status" value="1"/>
</dbReference>
<dbReference type="Gene3D" id="4.10.1000.10">
    <property type="entry name" value="Zinc finger, CCCH-type"/>
    <property type="match status" value="1"/>
</dbReference>
<dbReference type="InterPro" id="IPR041686">
    <property type="entry name" value="Znf-CCCH_3"/>
</dbReference>
<dbReference type="InterPro" id="IPR000571">
    <property type="entry name" value="Znf_CCCH"/>
</dbReference>
<dbReference type="InterPro" id="IPR036855">
    <property type="entry name" value="Znf_CCCH_sf"/>
</dbReference>
<dbReference type="PANTHER" id="PTHR15725:SF22">
    <property type="entry name" value="ZINC FINGER CCCH DOMAIN-CONTAINING PROTEIN 34"/>
    <property type="match status" value="1"/>
</dbReference>
<dbReference type="PANTHER" id="PTHR15725">
    <property type="entry name" value="ZN-FINGER, C-X8-C-X5-C-X3-H TYPE-CONTAINING"/>
    <property type="match status" value="1"/>
</dbReference>
<dbReference type="Pfam" id="PF14608">
    <property type="entry name" value="zf-CCCH_2"/>
    <property type="match status" value="1"/>
</dbReference>
<dbReference type="Pfam" id="PF15663">
    <property type="entry name" value="zf-CCCH_3"/>
    <property type="match status" value="1"/>
</dbReference>
<dbReference type="SMART" id="SM00356">
    <property type="entry name" value="ZnF_C3H1"/>
    <property type="match status" value="3"/>
</dbReference>
<dbReference type="SUPFAM" id="SSF90229">
    <property type="entry name" value="CCCH zinc finger"/>
    <property type="match status" value="1"/>
</dbReference>
<dbReference type="PROSITE" id="PS50103">
    <property type="entry name" value="ZF_C3H1"/>
    <property type="match status" value="3"/>
</dbReference>
<evidence type="ECO:0000255" key="1">
    <source>
        <dbReference type="PROSITE-ProRule" id="PRU00723"/>
    </source>
</evidence>
<evidence type="ECO:0000256" key="2">
    <source>
        <dbReference type="SAM" id="MobiDB-lite"/>
    </source>
</evidence>
<evidence type="ECO:0000312" key="3">
    <source>
        <dbReference type="EMBL" id="EEE62514.1"/>
    </source>
</evidence>
<organism>
    <name type="scientific">Oryza sativa subsp. japonica</name>
    <name type="common">Rice</name>
    <dbReference type="NCBI Taxonomy" id="39947"/>
    <lineage>
        <taxon>Eukaryota</taxon>
        <taxon>Viridiplantae</taxon>
        <taxon>Streptophyta</taxon>
        <taxon>Embryophyta</taxon>
        <taxon>Tracheophyta</taxon>
        <taxon>Spermatophyta</taxon>
        <taxon>Magnoliopsida</taxon>
        <taxon>Liliopsida</taxon>
        <taxon>Poales</taxon>
        <taxon>Poaceae</taxon>
        <taxon>BOP clade</taxon>
        <taxon>Oryzoideae</taxon>
        <taxon>Oryzeae</taxon>
        <taxon>Oryzinae</taxon>
        <taxon>Oryza</taxon>
        <taxon>Oryza sativa</taxon>
    </lineage>
</organism>
<sequence>MAAAAEGDEDPRWRRCNTDCVYFLASPFTCTKGSKCEYRHADGARFNRRNCWYWFKGNCVNPSCTFRHPPLENLNKTKSLADPLSLCSTSVKAANPCYFYYNSHCSKGDNCPYLHEPLTSNDAVGTSCKATTSNPAVSKSYVGDEMVEESKDTITNPCQDTSCHIKEVPVSINPEFGEAEAVSGALETSTDIDEYMKCSAVSDLNSGDSTMDHTEQDERDSSPGFDVLVDDCLSNKSDLEHQLTTESDNKVLHAEYGIRDPVLYDMYYHDPEYYNYEPEFCGLDDRQGYLYLCQPNGAHEHESEITLGHLLPQNTEVTSDEYDRRFFNPRNFTSSVADTNFVHQHTQIRHISKRRPENRKGAKGKKDCIKRSRCLEPKNSTQQIESMPTRQRKDYLMGECPQPANHATFRGRRKKNRGKQQHVLSAKSSEHPTADFTGPKTLAQIKEEKCKSNSSFSHSTACTPNVRSFSDDFEGPKSLTELLMTKSRSSVGK</sequence>
<gene>
    <name type="ordered locus">Os05g0176400</name>
    <name type="ordered locus">LOC_Os05g08400</name>
    <name type="ORF">OsJ_016547</name>
    <name evidence="3" type="ORF">OsJ_17312</name>
    <name type="ORF">OSJNBa0029B02.4</name>
</gene>
<reference key="1">
    <citation type="journal article" date="2005" name="Mol. Genet. Genomics">
        <title>A fine physical map of the rice chromosome 5.</title>
        <authorList>
            <person name="Cheng C.-H."/>
            <person name="Chung M.C."/>
            <person name="Liu S.-M."/>
            <person name="Chen S.-K."/>
            <person name="Kao F.Y."/>
            <person name="Lin S.-J."/>
            <person name="Hsiao S.-H."/>
            <person name="Tseng I.C."/>
            <person name="Hsing Y.-I.C."/>
            <person name="Wu H.-P."/>
            <person name="Chen C.-S."/>
            <person name="Shaw J.-F."/>
            <person name="Wu J."/>
            <person name="Matsumoto T."/>
            <person name="Sasaki T."/>
            <person name="Chen H.-C."/>
            <person name="Chow T.-Y."/>
        </authorList>
    </citation>
    <scope>NUCLEOTIDE SEQUENCE [LARGE SCALE GENOMIC DNA]</scope>
    <source>
        <strain>cv. Nipponbare</strain>
    </source>
</reference>
<reference key="2">
    <citation type="journal article" date="2005" name="Nature">
        <title>The map-based sequence of the rice genome.</title>
        <authorList>
            <consortium name="International rice genome sequencing project (IRGSP)"/>
        </authorList>
    </citation>
    <scope>NUCLEOTIDE SEQUENCE [LARGE SCALE GENOMIC DNA]</scope>
    <source>
        <strain>cv. Nipponbare</strain>
    </source>
</reference>
<reference key="3">
    <citation type="journal article" date="2008" name="Nucleic Acids Res.">
        <title>The rice annotation project database (RAP-DB): 2008 update.</title>
        <authorList>
            <consortium name="The rice annotation project (RAP)"/>
        </authorList>
    </citation>
    <scope>GENOME REANNOTATION</scope>
    <source>
        <strain>cv. Nipponbare</strain>
    </source>
</reference>
<reference key="4">
    <citation type="journal article" date="2013" name="Rice">
        <title>Improvement of the Oryza sativa Nipponbare reference genome using next generation sequence and optical map data.</title>
        <authorList>
            <person name="Kawahara Y."/>
            <person name="de la Bastide M."/>
            <person name="Hamilton J.P."/>
            <person name="Kanamori H."/>
            <person name="McCombie W.R."/>
            <person name="Ouyang S."/>
            <person name="Schwartz D.C."/>
            <person name="Tanaka T."/>
            <person name="Wu J."/>
            <person name="Zhou S."/>
            <person name="Childs K.L."/>
            <person name="Davidson R.M."/>
            <person name="Lin H."/>
            <person name="Quesada-Ocampo L."/>
            <person name="Vaillancourt B."/>
            <person name="Sakai H."/>
            <person name="Lee S.S."/>
            <person name="Kim J."/>
            <person name="Numa H."/>
            <person name="Itoh T."/>
            <person name="Buell C.R."/>
            <person name="Matsumoto T."/>
        </authorList>
    </citation>
    <scope>GENOME REANNOTATION</scope>
    <source>
        <strain>cv. Nipponbare</strain>
    </source>
</reference>
<reference key="5">
    <citation type="journal article" date="2005" name="PLoS Biol.">
        <title>The genomes of Oryza sativa: a history of duplications.</title>
        <authorList>
            <person name="Yu J."/>
            <person name="Wang J."/>
            <person name="Lin W."/>
            <person name="Li S."/>
            <person name="Li H."/>
            <person name="Zhou J."/>
            <person name="Ni P."/>
            <person name="Dong W."/>
            <person name="Hu S."/>
            <person name="Zeng C."/>
            <person name="Zhang J."/>
            <person name="Zhang Y."/>
            <person name="Li R."/>
            <person name="Xu Z."/>
            <person name="Li S."/>
            <person name="Li X."/>
            <person name="Zheng H."/>
            <person name="Cong L."/>
            <person name="Lin L."/>
            <person name="Yin J."/>
            <person name="Geng J."/>
            <person name="Li G."/>
            <person name="Shi J."/>
            <person name="Liu J."/>
            <person name="Lv H."/>
            <person name="Li J."/>
            <person name="Wang J."/>
            <person name="Deng Y."/>
            <person name="Ran L."/>
            <person name="Shi X."/>
            <person name="Wang X."/>
            <person name="Wu Q."/>
            <person name="Li C."/>
            <person name="Ren X."/>
            <person name="Wang J."/>
            <person name="Wang X."/>
            <person name="Li D."/>
            <person name="Liu D."/>
            <person name="Zhang X."/>
            <person name="Ji Z."/>
            <person name="Zhao W."/>
            <person name="Sun Y."/>
            <person name="Zhang Z."/>
            <person name="Bao J."/>
            <person name="Han Y."/>
            <person name="Dong L."/>
            <person name="Ji J."/>
            <person name="Chen P."/>
            <person name="Wu S."/>
            <person name="Liu J."/>
            <person name="Xiao Y."/>
            <person name="Bu D."/>
            <person name="Tan J."/>
            <person name="Yang L."/>
            <person name="Ye C."/>
            <person name="Zhang J."/>
            <person name="Xu J."/>
            <person name="Zhou Y."/>
            <person name="Yu Y."/>
            <person name="Zhang B."/>
            <person name="Zhuang S."/>
            <person name="Wei H."/>
            <person name="Liu B."/>
            <person name="Lei M."/>
            <person name="Yu H."/>
            <person name="Li Y."/>
            <person name="Xu H."/>
            <person name="Wei S."/>
            <person name="He X."/>
            <person name="Fang L."/>
            <person name="Zhang Z."/>
            <person name="Zhang Y."/>
            <person name="Huang X."/>
            <person name="Su Z."/>
            <person name="Tong W."/>
            <person name="Li J."/>
            <person name="Tong Z."/>
            <person name="Li S."/>
            <person name="Ye J."/>
            <person name="Wang L."/>
            <person name="Fang L."/>
            <person name="Lei T."/>
            <person name="Chen C.-S."/>
            <person name="Chen H.-C."/>
            <person name="Xu Z."/>
            <person name="Li H."/>
            <person name="Huang H."/>
            <person name="Zhang F."/>
            <person name="Xu H."/>
            <person name="Li N."/>
            <person name="Zhao C."/>
            <person name="Li S."/>
            <person name="Dong L."/>
            <person name="Huang Y."/>
            <person name="Li L."/>
            <person name="Xi Y."/>
            <person name="Qi Q."/>
            <person name="Li W."/>
            <person name="Zhang B."/>
            <person name="Hu W."/>
            <person name="Zhang Y."/>
            <person name="Tian X."/>
            <person name="Jiao Y."/>
            <person name="Liang X."/>
            <person name="Jin J."/>
            <person name="Gao L."/>
            <person name="Zheng W."/>
            <person name="Hao B."/>
            <person name="Liu S.-M."/>
            <person name="Wang W."/>
            <person name="Yuan L."/>
            <person name="Cao M."/>
            <person name="McDermott J."/>
            <person name="Samudrala R."/>
            <person name="Wang J."/>
            <person name="Wong G.K.-S."/>
            <person name="Yang H."/>
        </authorList>
    </citation>
    <scope>NUCLEOTIDE SEQUENCE [LARGE SCALE GENOMIC DNA]</scope>
    <source>
        <strain>cv. Nipponbare</strain>
    </source>
</reference>
<reference key="6">
    <citation type="journal article" date="2003" name="Science">
        <title>Collection, mapping, and annotation of over 28,000 cDNA clones from japonica rice.</title>
        <authorList>
            <consortium name="The rice full-length cDNA consortium"/>
        </authorList>
    </citation>
    <scope>NUCLEOTIDE SEQUENCE [LARGE SCALE MRNA]</scope>
    <source>
        <strain>cv. Nipponbare</strain>
    </source>
</reference>
<reference key="7">
    <citation type="journal article" date="2008" name="BMC Genomics">
        <title>Genome-wide analysis of CCCH zinc finger family in Arabidopsis and rice.</title>
        <authorList>
            <person name="Wang D."/>
            <person name="Guo Y."/>
            <person name="Wu C."/>
            <person name="Yang G."/>
            <person name="Li Y."/>
            <person name="Zheng C."/>
        </authorList>
    </citation>
    <scope>NOMENCLATURE</scope>
</reference>
<accession>Q6AT25</accession>
<accession>B7ETH0</accession>
<feature type="chain" id="PRO_0000346829" description="Zinc finger CCCH domain-containing protein 34">
    <location>
        <begin position="1"/>
        <end position="493"/>
    </location>
</feature>
<feature type="zinc finger region" description="C3H1-type 1" evidence="1">
    <location>
        <begin position="14"/>
        <end position="43"/>
    </location>
</feature>
<feature type="zinc finger region" description="C3H1-type 2" evidence="1">
    <location>
        <begin position="45"/>
        <end position="71"/>
    </location>
</feature>
<feature type="zinc finger region" description="C3H1-type 3" evidence="1">
    <location>
        <begin position="91"/>
        <end position="118"/>
    </location>
</feature>
<feature type="region of interest" description="Disordered" evidence="2">
    <location>
        <begin position="397"/>
        <end position="477"/>
    </location>
</feature>
<feature type="compositionally biased region" description="Basic residues" evidence="2">
    <location>
        <begin position="409"/>
        <end position="420"/>
    </location>
</feature>
<feature type="compositionally biased region" description="Polar residues" evidence="2">
    <location>
        <begin position="452"/>
        <end position="468"/>
    </location>
</feature>
<proteinExistence type="evidence at transcript level"/>
<name>C3H34_ORYSJ</name>
<protein>
    <recommendedName>
        <fullName>Zinc finger CCCH domain-containing protein 34</fullName>
        <shortName>OsC3H34</shortName>
    </recommendedName>
</protein>
<keyword id="KW-0238">DNA-binding</keyword>
<keyword id="KW-0479">Metal-binding</keyword>
<keyword id="KW-1185">Reference proteome</keyword>
<keyword id="KW-0677">Repeat</keyword>
<keyword id="KW-0862">Zinc</keyword>
<keyword id="KW-0863">Zinc-finger</keyword>